<reference key="1">
    <citation type="journal article" date="1997" name="Appl. Environ. Microbiol.">
        <title>Cloning, nucleotide sequence, and regulatory analysis of the Nitrosomonas europaea dnaK gene.</title>
        <authorList>
            <person name="Iizumi T."/>
            <person name="Nakamura K."/>
        </authorList>
    </citation>
    <scope>NUCLEOTIDE SEQUENCE [GENOMIC DNA]</scope>
    <source>
        <strain>ATCC 19718 / CIP 103999 / KCTC 2705 / NBRC 14298</strain>
    </source>
</reference>
<reference key="2">
    <citation type="journal article" date="2003" name="J. Bacteriol.">
        <title>Complete genome sequence of the ammonia-oxidizing bacterium and obligate chemolithoautotroph Nitrosomonas europaea.</title>
        <authorList>
            <person name="Chain P."/>
            <person name="Lamerdin J.E."/>
            <person name="Larimer F.W."/>
            <person name="Regala W."/>
            <person name="Lao V."/>
            <person name="Land M.L."/>
            <person name="Hauser L."/>
            <person name="Hooper A.B."/>
            <person name="Klotz M.G."/>
            <person name="Norton J."/>
            <person name="Sayavedra-Soto L.A."/>
            <person name="Arciero D.M."/>
            <person name="Hommes N.G."/>
            <person name="Whittaker M.M."/>
            <person name="Arp D.J."/>
        </authorList>
    </citation>
    <scope>NUCLEOTIDE SEQUENCE [LARGE SCALE GENOMIC DNA]</scope>
    <source>
        <strain>ATCC 19718 / CIP 103999 / KCTC 2705 / NBRC 14298</strain>
    </source>
</reference>
<accession>O06430</accession>
<name>DNAK_NITEU</name>
<organism>
    <name type="scientific">Nitrosomonas europaea (strain ATCC 19718 / CIP 103999 / KCTC 2705 / NBRC 14298)</name>
    <dbReference type="NCBI Taxonomy" id="228410"/>
    <lineage>
        <taxon>Bacteria</taxon>
        <taxon>Pseudomonadati</taxon>
        <taxon>Pseudomonadota</taxon>
        <taxon>Betaproteobacteria</taxon>
        <taxon>Nitrosomonadales</taxon>
        <taxon>Nitrosomonadaceae</taxon>
        <taxon>Nitrosomonas</taxon>
    </lineage>
</organism>
<keyword id="KW-0067">ATP-binding</keyword>
<keyword id="KW-0143">Chaperone</keyword>
<keyword id="KW-0547">Nucleotide-binding</keyword>
<keyword id="KW-0597">Phosphoprotein</keyword>
<keyword id="KW-1185">Reference proteome</keyword>
<keyword id="KW-0346">Stress response</keyword>
<evidence type="ECO:0000250" key="1"/>
<evidence type="ECO:0000256" key="2">
    <source>
        <dbReference type="SAM" id="MobiDB-lite"/>
    </source>
</evidence>
<evidence type="ECO:0000305" key="3"/>
<comment type="function">
    <text evidence="1">Acts as a chaperone.</text>
</comment>
<comment type="induction">
    <text evidence="1">By stress conditions e.g. heat shock (By similarity).</text>
</comment>
<comment type="similarity">
    <text evidence="3">Belongs to the heat shock protein 70 family.</text>
</comment>
<feature type="chain" id="PRO_0000078504" description="Chaperone protein DnaK">
    <location>
        <begin position="1"/>
        <end position="644"/>
    </location>
</feature>
<feature type="region of interest" description="Disordered" evidence="2">
    <location>
        <begin position="597"/>
        <end position="644"/>
    </location>
</feature>
<feature type="compositionally biased region" description="Low complexity" evidence="2">
    <location>
        <begin position="604"/>
        <end position="617"/>
    </location>
</feature>
<feature type="modified residue" description="Phosphothreonine; by autocatalysis" evidence="1">
    <location>
        <position position="199"/>
    </location>
</feature>
<sequence length="644" mass="69695">MAKIIGIDLGTTNSCVAVMEGNKPKVIENAEGARTTPSIVAYAEDNEILVGASAKRQAVTNPENTLFAIKRLIGRRFDEEVVQKDISVTPYKIVRADNNDAWIEARGRKIAPPEVSAQVLIKMKKTAEDYLGEPVTEAVITVPAYFNDSQRQATKDAGRIAGLEVKRIINEPTAAALAFGLDKKEGDRKIAVYDLGGGTFDISIIEIAEVEGEHQFEVLATNGDTFLGGEDFDSRVIEYLVDEFRKESGIDLKKDMLALQRLKDAAEKAKIELSSSQQTEVNLPYITADASGPKHLAVKITRAKLESLVEELIERTAGPCRTALKDAGLSVSDINDVILVGGQTRMPKVQEKVKEIFGKEPRKDVNPDEAVAIGAAIQGGVLKGDVKDVLLLDVTPLSLGIETLGGVMTKLIQKNTTIPTKAQQVFSTADDNQTAVTIHVLQGEREVASGNKSLGQFNLTDIPSAPRGMPQIEVIFDIDANGILHVSAKDKATGKENKIKIQASSGLSEDEIQKMVKDAEAHAEEDKKALDLVNSRNQCDAMIHSVRKSLAEYGDKLEGDEKSRIEAALKEAEEALKSGDKQTIDAKTQALTEASHKLAEKMYAQEQAQAGQQAGAGTASDQSQDKPVEGEVVDAEFEEVKDKK</sequence>
<proteinExistence type="inferred from homology"/>
<protein>
    <recommendedName>
        <fullName>Chaperone protein DnaK</fullName>
    </recommendedName>
    <alternativeName>
        <fullName>HSP70</fullName>
    </alternativeName>
    <alternativeName>
        <fullName>Heat shock 70 kDa protein</fullName>
    </alternativeName>
    <alternativeName>
        <fullName>Heat shock protein 70</fullName>
    </alternativeName>
</protein>
<dbReference type="EMBL" id="AB018706">
    <property type="protein sequence ID" value="BAA33935.1"/>
    <property type="molecule type" value="Genomic_DNA"/>
</dbReference>
<dbReference type="EMBL" id="AL954747">
    <property type="protein sequence ID" value="CAD85860.1"/>
    <property type="molecule type" value="Genomic_DNA"/>
</dbReference>
<dbReference type="RefSeq" id="WP_011112481.1">
    <property type="nucleotide sequence ID" value="NC_004757.1"/>
</dbReference>
<dbReference type="SMR" id="O06430"/>
<dbReference type="STRING" id="228410.NE1949"/>
<dbReference type="GeneID" id="87105103"/>
<dbReference type="KEGG" id="neu:NE1949"/>
<dbReference type="eggNOG" id="COG0443">
    <property type="taxonomic scope" value="Bacteria"/>
</dbReference>
<dbReference type="HOGENOM" id="CLU_005965_2_4_4"/>
<dbReference type="OrthoDB" id="9766019at2"/>
<dbReference type="PhylomeDB" id="O06430"/>
<dbReference type="Proteomes" id="UP000001416">
    <property type="component" value="Chromosome"/>
</dbReference>
<dbReference type="GO" id="GO:0005524">
    <property type="term" value="F:ATP binding"/>
    <property type="evidence" value="ECO:0007669"/>
    <property type="project" value="UniProtKB-UniRule"/>
</dbReference>
<dbReference type="GO" id="GO:0140662">
    <property type="term" value="F:ATP-dependent protein folding chaperone"/>
    <property type="evidence" value="ECO:0007669"/>
    <property type="project" value="InterPro"/>
</dbReference>
<dbReference type="GO" id="GO:0051082">
    <property type="term" value="F:unfolded protein binding"/>
    <property type="evidence" value="ECO:0007669"/>
    <property type="project" value="InterPro"/>
</dbReference>
<dbReference type="CDD" id="cd10234">
    <property type="entry name" value="ASKHA_NBD_HSP70_DnaK-like"/>
    <property type="match status" value="1"/>
</dbReference>
<dbReference type="FunFam" id="2.60.34.10:FF:000014">
    <property type="entry name" value="Chaperone protein DnaK HSP70"/>
    <property type="match status" value="1"/>
</dbReference>
<dbReference type="FunFam" id="3.30.30.30:FF:000003">
    <property type="entry name" value="Heat shock protein 9"/>
    <property type="match status" value="1"/>
</dbReference>
<dbReference type="FunFam" id="1.20.1270.10:FF:000001">
    <property type="entry name" value="Molecular chaperone DnaK"/>
    <property type="match status" value="1"/>
</dbReference>
<dbReference type="FunFam" id="3.30.420.40:FF:000004">
    <property type="entry name" value="Molecular chaperone DnaK"/>
    <property type="match status" value="1"/>
</dbReference>
<dbReference type="FunFam" id="3.90.640.10:FF:000003">
    <property type="entry name" value="Molecular chaperone DnaK"/>
    <property type="match status" value="1"/>
</dbReference>
<dbReference type="Gene3D" id="1.20.1270.10">
    <property type="match status" value="1"/>
</dbReference>
<dbReference type="Gene3D" id="3.30.420.40">
    <property type="match status" value="2"/>
</dbReference>
<dbReference type="Gene3D" id="3.90.640.10">
    <property type="entry name" value="Actin, Chain A, domain 4"/>
    <property type="match status" value="1"/>
</dbReference>
<dbReference type="Gene3D" id="2.60.34.10">
    <property type="entry name" value="Substrate Binding Domain Of DNAk, Chain A, domain 1"/>
    <property type="match status" value="1"/>
</dbReference>
<dbReference type="HAMAP" id="MF_00332">
    <property type="entry name" value="DnaK"/>
    <property type="match status" value="1"/>
</dbReference>
<dbReference type="InterPro" id="IPR043129">
    <property type="entry name" value="ATPase_NBD"/>
</dbReference>
<dbReference type="InterPro" id="IPR012725">
    <property type="entry name" value="Chaperone_DnaK"/>
</dbReference>
<dbReference type="InterPro" id="IPR018181">
    <property type="entry name" value="Heat_shock_70_CS"/>
</dbReference>
<dbReference type="InterPro" id="IPR029048">
    <property type="entry name" value="HSP70_C_sf"/>
</dbReference>
<dbReference type="InterPro" id="IPR029047">
    <property type="entry name" value="HSP70_peptide-bd_sf"/>
</dbReference>
<dbReference type="InterPro" id="IPR013126">
    <property type="entry name" value="Hsp_70_fam"/>
</dbReference>
<dbReference type="NCBIfam" id="NF001413">
    <property type="entry name" value="PRK00290.1"/>
    <property type="match status" value="1"/>
</dbReference>
<dbReference type="NCBIfam" id="NF003520">
    <property type="entry name" value="PRK05183.1"/>
    <property type="match status" value="1"/>
</dbReference>
<dbReference type="NCBIfam" id="TIGR02350">
    <property type="entry name" value="prok_dnaK"/>
    <property type="match status" value="1"/>
</dbReference>
<dbReference type="PANTHER" id="PTHR19375">
    <property type="entry name" value="HEAT SHOCK PROTEIN 70KDA"/>
    <property type="match status" value="1"/>
</dbReference>
<dbReference type="Pfam" id="PF00012">
    <property type="entry name" value="HSP70"/>
    <property type="match status" value="1"/>
</dbReference>
<dbReference type="PRINTS" id="PR00301">
    <property type="entry name" value="HEATSHOCK70"/>
</dbReference>
<dbReference type="SUPFAM" id="SSF53067">
    <property type="entry name" value="Actin-like ATPase domain"/>
    <property type="match status" value="2"/>
</dbReference>
<dbReference type="SUPFAM" id="SSF100934">
    <property type="entry name" value="Heat shock protein 70kD (HSP70), C-terminal subdomain"/>
    <property type="match status" value="1"/>
</dbReference>
<dbReference type="SUPFAM" id="SSF100920">
    <property type="entry name" value="Heat shock protein 70kD (HSP70), peptide-binding domain"/>
    <property type="match status" value="1"/>
</dbReference>
<dbReference type="PROSITE" id="PS00297">
    <property type="entry name" value="HSP70_1"/>
    <property type="match status" value="1"/>
</dbReference>
<dbReference type="PROSITE" id="PS00329">
    <property type="entry name" value="HSP70_2"/>
    <property type="match status" value="1"/>
</dbReference>
<dbReference type="PROSITE" id="PS01036">
    <property type="entry name" value="HSP70_3"/>
    <property type="match status" value="1"/>
</dbReference>
<gene>
    <name type="primary">dnaK</name>
    <name type="ordered locus">NE1949</name>
</gene>